<name>TYRA_ENTAG</name>
<comment type="catalytic activity">
    <reaction>
        <text>chorismate = prephenate</text>
        <dbReference type="Rhea" id="RHEA:13897"/>
        <dbReference type="ChEBI" id="CHEBI:29748"/>
        <dbReference type="ChEBI" id="CHEBI:29934"/>
        <dbReference type="EC" id="5.4.99.5"/>
    </reaction>
</comment>
<comment type="catalytic activity">
    <reaction>
        <text>prephenate + NAD(+) = 3-(4-hydroxyphenyl)pyruvate + CO2 + NADH</text>
        <dbReference type="Rhea" id="RHEA:13869"/>
        <dbReference type="ChEBI" id="CHEBI:16526"/>
        <dbReference type="ChEBI" id="CHEBI:29934"/>
        <dbReference type="ChEBI" id="CHEBI:36242"/>
        <dbReference type="ChEBI" id="CHEBI:57540"/>
        <dbReference type="ChEBI" id="CHEBI:57945"/>
        <dbReference type="EC" id="1.3.1.12"/>
    </reaction>
</comment>
<comment type="pathway">
    <text>Amino-acid biosynthesis; L-tyrosine biosynthesis; (4-hydroxyphenyl)pyruvate from prephenate (NAD(+) route): step 1/1.</text>
</comment>
<comment type="pathway">
    <text>Metabolic intermediate biosynthesis; prephenate biosynthesis; prephenate from chorismate: step 1/1.</text>
</comment>
<comment type="subcellular location">
    <subcellularLocation>
        <location>Cytoplasm</location>
    </subcellularLocation>
</comment>
<comment type="similarity">
    <text evidence="3">In the C-terminal section; belongs to the prephenate/arogenate dehydrogenase family.</text>
</comment>
<gene>
    <name type="primary">tyrA</name>
</gene>
<accession>Q02287</accession>
<evidence type="ECO:0000255" key="1">
    <source>
        <dbReference type="PROSITE-ProRule" id="PRU00515"/>
    </source>
</evidence>
<evidence type="ECO:0000255" key="2">
    <source>
        <dbReference type="PROSITE-ProRule" id="PRU00522"/>
    </source>
</evidence>
<evidence type="ECO:0000305" key="3"/>
<feature type="chain" id="PRO_0000119196" description="T-protein">
    <location>
        <begin position="1"/>
        <end position="373"/>
    </location>
</feature>
<feature type="domain" description="Chorismate mutase" evidence="1">
    <location>
        <begin position="1"/>
        <end position="90"/>
    </location>
</feature>
<feature type="domain" description="Prephenate/arogenate dehydrogenase" evidence="2">
    <location>
        <begin position="99"/>
        <end position="361"/>
    </location>
</feature>
<dbReference type="EC" id="5.4.99.5"/>
<dbReference type="EC" id="1.3.1.12"/>
<dbReference type="EMBL" id="X60420">
    <property type="protein sequence ID" value="CAA42950.1"/>
    <property type="molecule type" value="Genomic_DNA"/>
</dbReference>
<dbReference type="EMBL" id="M74135">
    <property type="protein sequence ID" value="AAA24868.1"/>
    <property type="molecule type" value="Genomic_DNA"/>
</dbReference>
<dbReference type="PIR" id="S29934">
    <property type="entry name" value="S29934"/>
</dbReference>
<dbReference type="RefSeq" id="WP_010248465.1">
    <property type="nucleotide sequence ID" value="NZ_WSSZ01000007.1"/>
</dbReference>
<dbReference type="SMR" id="Q02287"/>
<dbReference type="STRING" id="549.BEE12_02585"/>
<dbReference type="GeneID" id="66824882"/>
<dbReference type="eggNOG" id="COG0287">
    <property type="taxonomic scope" value="Bacteria"/>
</dbReference>
<dbReference type="eggNOG" id="COG1605">
    <property type="taxonomic scope" value="Bacteria"/>
</dbReference>
<dbReference type="OrthoDB" id="6198144at2"/>
<dbReference type="UniPathway" id="UPA00120">
    <property type="reaction ID" value="UER00203"/>
</dbReference>
<dbReference type="UniPathway" id="UPA00122">
    <property type="reaction ID" value="UER00961"/>
</dbReference>
<dbReference type="GO" id="GO:0005737">
    <property type="term" value="C:cytoplasm"/>
    <property type="evidence" value="ECO:0007669"/>
    <property type="project" value="UniProtKB-SubCell"/>
</dbReference>
<dbReference type="GO" id="GO:0004106">
    <property type="term" value="F:chorismate mutase activity"/>
    <property type="evidence" value="ECO:0007669"/>
    <property type="project" value="UniProtKB-EC"/>
</dbReference>
<dbReference type="GO" id="GO:0070403">
    <property type="term" value="F:NAD+ binding"/>
    <property type="evidence" value="ECO:0007669"/>
    <property type="project" value="InterPro"/>
</dbReference>
<dbReference type="GO" id="GO:0008977">
    <property type="term" value="F:prephenate dehydrogenase (NAD+) activity"/>
    <property type="evidence" value="ECO:0007669"/>
    <property type="project" value="UniProtKB-EC"/>
</dbReference>
<dbReference type="GO" id="GO:0004665">
    <property type="term" value="F:prephenate dehydrogenase (NADP+) activity"/>
    <property type="evidence" value="ECO:0007669"/>
    <property type="project" value="InterPro"/>
</dbReference>
<dbReference type="GO" id="GO:0046417">
    <property type="term" value="P:chorismate metabolic process"/>
    <property type="evidence" value="ECO:0007669"/>
    <property type="project" value="InterPro"/>
</dbReference>
<dbReference type="GO" id="GO:0006571">
    <property type="term" value="P:tyrosine biosynthetic process"/>
    <property type="evidence" value="ECO:0007669"/>
    <property type="project" value="UniProtKB-UniPathway"/>
</dbReference>
<dbReference type="FunFam" id="1.10.3660.10:FF:000001">
    <property type="entry name" value="T-protein"/>
    <property type="match status" value="1"/>
</dbReference>
<dbReference type="FunFam" id="1.20.59.10:FF:000001">
    <property type="entry name" value="T-protein"/>
    <property type="match status" value="1"/>
</dbReference>
<dbReference type="FunFam" id="3.40.50.720:FF:000170">
    <property type="entry name" value="T-protein"/>
    <property type="match status" value="1"/>
</dbReference>
<dbReference type="Gene3D" id="1.10.3660.10">
    <property type="entry name" value="6-phosphogluconate dehydrogenase C-terminal like domain"/>
    <property type="match status" value="1"/>
</dbReference>
<dbReference type="Gene3D" id="1.20.59.10">
    <property type="entry name" value="Chorismate mutase"/>
    <property type="match status" value="1"/>
</dbReference>
<dbReference type="Gene3D" id="3.40.50.720">
    <property type="entry name" value="NAD(P)-binding Rossmann-like Domain"/>
    <property type="match status" value="1"/>
</dbReference>
<dbReference type="InterPro" id="IPR008927">
    <property type="entry name" value="6-PGluconate_DH-like_C_sf"/>
</dbReference>
<dbReference type="InterPro" id="IPR008244">
    <property type="entry name" value="Chor_mut/prephenate_DH_T"/>
</dbReference>
<dbReference type="InterPro" id="IPR036263">
    <property type="entry name" value="Chorismate_II_sf"/>
</dbReference>
<dbReference type="InterPro" id="IPR036979">
    <property type="entry name" value="CM_dom_sf"/>
</dbReference>
<dbReference type="InterPro" id="IPR002701">
    <property type="entry name" value="CM_II_prokaryot"/>
</dbReference>
<dbReference type="InterPro" id="IPR011277">
    <property type="entry name" value="CM_T"/>
</dbReference>
<dbReference type="InterPro" id="IPR036291">
    <property type="entry name" value="NAD(P)-bd_dom_sf"/>
</dbReference>
<dbReference type="InterPro" id="IPR046825">
    <property type="entry name" value="PDH_C"/>
</dbReference>
<dbReference type="InterPro" id="IPR046826">
    <property type="entry name" value="PDH_N"/>
</dbReference>
<dbReference type="InterPro" id="IPR050812">
    <property type="entry name" value="Preph/Arog_dehydrog"/>
</dbReference>
<dbReference type="InterPro" id="IPR003099">
    <property type="entry name" value="Prephen_DH"/>
</dbReference>
<dbReference type="NCBIfam" id="TIGR01799">
    <property type="entry name" value="CM_T"/>
    <property type="match status" value="1"/>
</dbReference>
<dbReference type="NCBIfam" id="NF008400">
    <property type="entry name" value="PRK11199.1"/>
    <property type="match status" value="1"/>
</dbReference>
<dbReference type="PANTHER" id="PTHR21363">
    <property type="entry name" value="PREPHENATE DEHYDROGENASE"/>
    <property type="match status" value="1"/>
</dbReference>
<dbReference type="PANTHER" id="PTHR21363:SF0">
    <property type="entry name" value="PREPHENATE DEHYDROGENASE [NADP(+)]"/>
    <property type="match status" value="1"/>
</dbReference>
<dbReference type="Pfam" id="PF01817">
    <property type="entry name" value="CM_2"/>
    <property type="match status" value="1"/>
</dbReference>
<dbReference type="Pfam" id="PF20463">
    <property type="entry name" value="PDH_C"/>
    <property type="match status" value="1"/>
</dbReference>
<dbReference type="Pfam" id="PF02153">
    <property type="entry name" value="PDH_N"/>
    <property type="match status" value="1"/>
</dbReference>
<dbReference type="PIRSF" id="PIRSF001499">
    <property type="entry name" value="Chor_mut_pdh_Tpr"/>
    <property type="match status" value="1"/>
</dbReference>
<dbReference type="SMART" id="SM00830">
    <property type="entry name" value="CM_2"/>
    <property type="match status" value="1"/>
</dbReference>
<dbReference type="SUPFAM" id="SSF48179">
    <property type="entry name" value="6-phosphogluconate dehydrogenase C-terminal domain-like"/>
    <property type="match status" value="1"/>
</dbReference>
<dbReference type="SUPFAM" id="SSF48600">
    <property type="entry name" value="Chorismate mutase II"/>
    <property type="match status" value="1"/>
</dbReference>
<dbReference type="SUPFAM" id="SSF51735">
    <property type="entry name" value="NAD(P)-binding Rossmann-fold domains"/>
    <property type="match status" value="1"/>
</dbReference>
<dbReference type="PROSITE" id="PS51168">
    <property type="entry name" value="CHORISMATE_MUT_2"/>
    <property type="match status" value="1"/>
</dbReference>
<dbReference type="PROSITE" id="PS51176">
    <property type="entry name" value="PDH_ADH"/>
    <property type="match status" value="1"/>
</dbReference>
<proteinExistence type="inferred from homology"/>
<organism>
    <name type="scientific">Enterobacter agglomerans</name>
    <name type="common">Erwinia herbicola</name>
    <name type="synonym">Pantoea agglomerans</name>
    <dbReference type="NCBI Taxonomy" id="549"/>
    <lineage>
        <taxon>Bacteria</taxon>
        <taxon>Pseudomonadati</taxon>
        <taxon>Pseudomonadota</taxon>
        <taxon>Gammaproteobacteria</taxon>
        <taxon>Enterobacterales</taxon>
        <taxon>Erwiniaceae</taxon>
        <taxon>Pantoea</taxon>
        <taxon>Pantoea agglomerans group</taxon>
    </lineage>
</organism>
<protein>
    <recommendedName>
        <fullName>T-protein</fullName>
    </recommendedName>
    <domain>
        <recommendedName>
            <fullName>Chorismate mutase</fullName>
            <shortName>CM</shortName>
            <ecNumber>5.4.99.5</ecNumber>
        </recommendedName>
    </domain>
    <domain>
        <recommendedName>
            <fullName>Prephenate dehydrogenase</fullName>
            <shortName>PDH</shortName>
            <ecNumber>1.3.1.12</ecNumber>
        </recommendedName>
    </domain>
</protein>
<reference key="1">
    <citation type="journal article" date="1992" name="J. Gen. Microbiol.">
        <title>A monofunctional prephenate dehydrogenase created by cleavage of the 5' 109 bp of the tyrA gene from Erwinia herbicola.</title>
        <authorList>
            <person name="Xia T."/>
            <person name="Zhao G."/>
            <person name="Fischer R.S."/>
            <person name="Jensen R.A."/>
        </authorList>
    </citation>
    <scope>NUCLEOTIDE SEQUENCE [GENOMIC DNA]</scope>
</reference>
<keyword id="KW-0028">Amino-acid biosynthesis</keyword>
<keyword id="KW-0057">Aromatic amino acid biosynthesis</keyword>
<keyword id="KW-0963">Cytoplasm</keyword>
<keyword id="KW-0413">Isomerase</keyword>
<keyword id="KW-0511">Multifunctional enzyme</keyword>
<keyword id="KW-0520">NAD</keyword>
<keyword id="KW-0560">Oxidoreductase</keyword>
<keyword id="KW-0827">Tyrosine biosynthesis</keyword>
<sequence>MVAELTALRDQIDSVDKALLDLLAKRLELVAEVGEVKSRYGLPIYVPEREASMLASRRKEAEALGVPPDLIEDVLRRVMRESYTSENDKGFKTLCPELRPVVIVGGKGQMGRLFEKMLGLSGYTVKTLDKEDWPQAETLLSDAGMVIISVPIHLTEQVIAQLPPLPEDCILVDLASVKNRPLQAMLAAHNGPVLGLHPMFGPDSGSLAKQVVVWCDGRQPEAYQWFLEQIQVWGARLHRISAVEHDQNMAFIQALRHFATFAYGLHLAEENVNLDQLLALSSPIYRLELAMVGRLFAQDPQLYADIIMSSESNLALIKRYYQRFGEAIALLEQGDKQAFIASFNRVEQWFGDHAKRFLVESRSLLRSANDSRP</sequence>